<gene>
    <name evidence="1" type="primary">rpsR</name>
    <name type="ordered locus">SAUSA300_0368</name>
</gene>
<proteinExistence type="inferred from homology"/>
<sequence length="80" mass="9310">MAGGPRRGGRRRKKVCYFTANGITHIDYKDTELLKRFISERGKILPRRVTGTSAKYQRMLTTAIKRSRHMALLPYVKEEQ</sequence>
<evidence type="ECO:0000255" key="1">
    <source>
        <dbReference type="HAMAP-Rule" id="MF_00270"/>
    </source>
</evidence>
<evidence type="ECO:0000305" key="2"/>
<accession>Q2FJP6</accession>
<name>RS18_STAA3</name>
<protein>
    <recommendedName>
        <fullName evidence="1">Small ribosomal subunit protein bS18</fullName>
    </recommendedName>
    <alternativeName>
        <fullName evidence="2">30S ribosomal protein S18</fullName>
    </alternativeName>
</protein>
<comment type="function">
    <text evidence="1">Binds as a heterodimer with protein bS6 to the central domain of the 16S rRNA, where it helps stabilize the platform of the 30S subunit.</text>
</comment>
<comment type="subunit">
    <text evidence="1">Part of the 30S ribosomal subunit. Forms a tight heterodimer with protein bS6.</text>
</comment>
<comment type="similarity">
    <text evidence="1">Belongs to the bacterial ribosomal protein bS18 family.</text>
</comment>
<reference key="1">
    <citation type="journal article" date="2006" name="Lancet">
        <title>Complete genome sequence of USA300, an epidemic clone of community-acquired meticillin-resistant Staphylococcus aureus.</title>
        <authorList>
            <person name="Diep B.A."/>
            <person name="Gill S.R."/>
            <person name="Chang R.F."/>
            <person name="Phan T.H."/>
            <person name="Chen J.H."/>
            <person name="Davidson M.G."/>
            <person name="Lin F."/>
            <person name="Lin J."/>
            <person name="Carleton H.A."/>
            <person name="Mongodin E.F."/>
            <person name="Sensabaugh G.F."/>
            <person name="Perdreau-Remington F."/>
        </authorList>
    </citation>
    <scope>NUCLEOTIDE SEQUENCE [LARGE SCALE GENOMIC DNA]</scope>
    <source>
        <strain>USA300</strain>
    </source>
</reference>
<organism>
    <name type="scientific">Staphylococcus aureus (strain USA300)</name>
    <dbReference type="NCBI Taxonomy" id="367830"/>
    <lineage>
        <taxon>Bacteria</taxon>
        <taxon>Bacillati</taxon>
        <taxon>Bacillota</taxon>
        <taxon>Bacilli</taxon>
        <taxon>Bacillales</taxon>
        <taxon>Staphylococcaceae</taxon>
        <taxon>Staphylococcus</taxon>
    </lineage>
</organism>
<keyword id="KW-0687">Ribonucleoprotein</keyword>
<keyword id="KW-0689">Ribosomal protein</keyword>
<keyword id="KW-0694">RNA-binding</keyword>
<keyword id="KW-0699">rRNA-binding</keyword>
<feature type="chain" id="PRO_1000003619" description="Small ribosomal subunit protein bS18">
    <location>
        <begin position="1"/>
        <end position="80"/>
    </location>
</feature>
<dbReference type="EMBL" id="CP000255">
    <property type="protein sequence ID" value="ABD21439.1"/>
    <property type="molecule type" value="Genomic_DNA"/>
</dbReference>
<dbReference type="RefSeq" id="WP_000897044.1">
    <property type="nucleotide sequence ID" value="NZ_CP027476.1"/>
</dbReference>
<dbReference type="SMR" id="Q2FJP6"/>
<dbReference type="GeneID" id="98344693"/>
<dbReference type="KEGG" id="saa:SAUSA300_0368"/>
<dbReference type="HOGENOM" id="CLU_148710_2_2_9"/>
<dbReference type="OMA" id="QKKYCRF"/>
<dbReference type="Proteomes" id="UP000001939">
    <property type="component" value="Chromosome"/>
</dbReference>
<dbReference type="GO" id="GO:0022627">
    <property type="term" value="C:cytosolic small ribosomal subunit"/>
    <property type="evidence" value="ECO:0007669"/>
    <property type="project" value="TreeGrafter"/>
</dbReference>
<dbReference type="GO" id="GO:0070181">
    <property type="term" value="F:small ribosomal subunit rRNA binding"/>
    <property type="evidence" value="ECO:0007669"/>
    <property type="project" value="TreeGrafter"/>
</dbReference>
<dbReference type="GO" id="GO:0003735">
    <property type="term" value="F:structural constituent of ribosome"/>
    <property type="evidence" value="ECO:0007669"/>
    <property type="project" value="InterPro"/>
</dbReference>
<dbReference type="GO" id="GO:0006412">
    <property type="term" value="P:translation"/>
    <property type="evidence" value="ECO:0007669"/>
    <property type="project" value="UniProtKB-UniRule"/>
</dbReference>
<dbReference type="FunFam" id="4.10.640.10:FF:000003">
    <property type="entry name" value="30S ribosomal protein S18"/>
    <property type="match status" value="1"/>
</dbReference>
<dbReference type="Gene3D" id="4.10.640.10">
    <property type="entry name" value="Ribosomal protein S18"/>
    <property type="match status" value="1"/>
</dbReference>
<dbReference type="HAMAP" id="MF_00270">
    <property type="entry name" value="Ribosomal_bS18"/>
    <property type="match status" value="1"/>
</dbReference>
<dbReference type="InterPro" id="IPR001648">
    <property type="entry name" value="Ribosomal_bS18"/>
</dbReference>
<dbReference type="InterPro" id="IPR018275">
    <property type="entry name" value="Ribosomal_bS18_CS"/>
</dbReference>
<dbReference type="InterPro" id="IPR036870">
    <property type="entry name" value="Ribosomal_bS18_sf"/>
</dbReference>
<dbReference type="NCBIfam" id="TIGR00165">
    <property type="entry name" value="S18"/>
    <property type="match status" value="1"/>
</dbReference>
<dbReference type="PANTHER" id="PTHR13479">
    <property type="entry name" value="30S RIBOSOMAL PROTEIN S18"/>
    <property type="match status" value="1"/>
</dbReference>
<dbReference type="PANTHER" id="PTHR13479:SF40">
    <property type="entry name" value="SMALL RIBOSOMAL SUBUNIT PROTEIN BS18M"/>
    <property type="match status" value="1"/>
</dbReference>
<dbReference type="Pfam" id="PF01084">
    <property type="entry name" value="Ribosomal_S18"/>
    <property type="match status" value="1"/>
</dbReference>
<dbReference type="PRINTS" id="PR00974">
    <property type="entry name" value="RIBOSOMALS18"/>
</dbReference>
<dbReference type="SUPFAM" id="SSF46911">
    <property type="entry name" value="Ribosomal protein S18"/>
    <property type="match status" value="1"/>
</dbReference>
<dbReference type="PROSITE" id="PS00057">
    <property type="entry name" value="RIBOSOMAL_S18"/>
    <property type="match status" value="1"/>
</dbReference>